<proteinExistence type="inferred from homology"/>
<accession>Q21S75</accession>
<feature type="chain" id="PRO_1000098752" description="Glycerol kinase">
    <location>
        <begin position="1"/>
        <end position="496"/>
    </location>
</feature>
<feature type="binding site" evidence="1">
    <location>
        <position position="11"/>
    </location>
    <ligand>
        <name>ADP</name>
        <dbReference type="ChEBI" id="CHEBI:456216"/>
    </ligand>
</feature>
<feature type="binding site" evidence="1">
    <location>
        <position position="11"/>
    </location>
    <ligand>
        <name>ATP</name>
        <dbReference type="ChEBI" id="CHEBI:30616"/>
    </ligand>
</feature>
<feature type="binding site" evidence="1">
    <location>
        <position position="11"/>
    </location>
    <ligand>
        <name>sn-glycerol 3-phosphate</name>
        <dbReference type="ChEBI" id="CHEBI:57597"/>
    </ligand>
</feature>
<feature type="binding site" evidence="1">
    <location>
        <position position="12"/>
    </location>
    <ligand>
        <name>ATP</name>
        <dbReference type="ChEBI" id="CHEBI:30616"/>
    </ligand>
</feature>
<feature type="binding site" evidence="1">
    <location>
        <position position="13"/>
    </location>
    <ligand>
        <name>ATP</name>
        <dbReference type="ChEBI" id="CHEBI:30616"/>
    </ligand>
</feature>
<feature type="binding site" evidence="1">
    <location>
        <position position="15"/>
    </location>
    <ligand>
        <name>ADP</name>
        <dbReference type="ChEBI" id="CHEBI:456216"/>
    </ligand>
</feature>
<feature type="binding site" evidence="1">
    <location>
        <position position="81"/>
    </location>
    <ligand>
        <name>glycerol</name>
        <dbReference type="ChEBI" id="CHEBI:17754"/>
    </ligand>
</feature>
<feature type="binding site" evidence="1">
    <location>
        <position position="81"/>
    </location>
    <ligand>
        <name>sn-glycerol 3-phosphate</name>
        <dbReference type="ChEBI" id="CHEBI:57597"/>
    </ligand>
</feature>
<feature type="binding site" evidence="1">
    <location>
        <position position="82"/>
    </location>
    <ligand>
        <name>glycerol</name>
        <dbReference type="ChEBI" id="CHEBI:17754"/>
    </ligand>
</feature>
<feature type="binding site" evidence="1">
    <location>
        <position position="82"/>
    </location>
    <ligand>
        <name>sn-glycerol 3-phosphate</name>
        <dbReference type="ChEBI" id="CHEBI:57597"/>
    </ligand>
</feature>
<feature type="binding site" evidence="1">
    <location>
        <position position="133"/>
    </location>
    <ligand>
        <name>glycerol</name>
        <dbReference type="ChEBI" id="CHEBI:17754"/>
    </ligand>
</feature>
<feature type="binding site" evidence="1">
    <location>
        <position position="133"/>
    </location>
    <ligand>
        <name>sn-glycerol 3-phosphate</name>
        <dbReference type="ChEBI" id="CHEBI:57597"/>
    </ligand>
</feature>
<feature type="binding site" evidence="1">
    <location>
        <position position="242"/>
    </location>
    <ligand>
        <name>glycerol</name>
        <dbReference type="ChEBI" id="CHEBI:17754"/>
    </ligand>
</feature>
<feature type="binding site" evidence="1">
    <location>
        <position position="242"/>
    </location>
    <ligand>
        <name>sn-glycerol 3-phosphate</name>
        <dbReference type="ChEBI" id="CHEBI:57597"/>
    </ligand>
</feature>
<feature type="binding site" evidence="1">
    <location>
        <position position="243"/>
    </location>
    <ligand>
        <name>glycerol</name>
        <dbReference type="ChEBI" id="CHEBI:17754"/>
    </ligand>
</feature>
<feature type="binding site" evidence="1">
    <location>
        <position position="264"/>
    </location>
    <ligand>
        <name>ADP</name>
        <dbReference type="ChEBI" id="CHEBI:456216"/>
    </ligand>
</feature>
<feature type="binding site" evidence="1">
    <location>
        <position position="264"/>
    </location>
    <ligand>
        <name>ATP</name>
        <dbReference type="ChEBI" id="CHEBI:30616"/>
    </ligand>
</feature>
<feature type="binding site" evidence="1">
    <location>
        <position position="307"/>
    </location>
    <ligand>
        <name>ADP</name>
        <dbReference type="ChEBI" id="CHEBI:456216"/>
    </ligand>
</feature>
<feature type="binding site" evidence="1">
    <location>
        <position position="307"/>
    </location>
    <ligand>
        <name>ATP</name>
        <dbReference type="ChEBI" id="CHEBI:30616"/>
    </ligand>
</feature>
<feature type="binding site" evidence="1">
    <location>
        <position position="311"/>
    </location>
    <ligand>
        <name>ATP</name>
        <dbReference type="ChEBI" id="CHEBI:30616"/>
    </ligand>
</feature>
<feature type="binding site" evidence="1">
    <location>
        <position position="412"/>
    </location>
    <ligand>
        <name>ADP</name>
        <dbReference type="ChEBI" id="CHEBI:456216"/>
    </ligand>
</feature>
<feature type="binding site" evidence="1">
    <location>
        <position position="412"/>
    </location>
    <ligand>
        <name>ATP</name>
        <dbReference type="ChEBI" id="CHEBI:30616"/>
    </ligand>
</feature>
<feature type="binding site" evidence="1">
    <location>
        <position position="416"/>
    </location>
    <ligand>
        <name>ADP</name>
        <dbReference type="ChEBI" id="CHEBI:456216"/>
    </ligand>
</feature>
<reference key="1">
    <citation type="submission" date="2006-02" db="EMBL/GenBank/DDBJ databases">
        <title>Complete sequence of chromosome of Rhodoferax ferrireducens DSM 15236.</title>
        <authorList>
            <person name="Copeland A."/>
            <person name="Lucas S."/>
            <person name="Lapidus A."/>
            <person name="Barry K."/>
            <person name="Detter J.C."/>
            <person name="Glavina del Rio T."/>
            <person name="Hammon N."/>
            <person name="Israni S."/>
            <person name="Pitluck S."/>
            <person name="Brettin T."/>
            <person name="Bruce D."/>
            <person name="Han C."/>
            <person name="Tapia R."/>
            <person name="Gilna P."/>
            <person name="Kiss H."/>
            <person name="Schmutz J."/>
            <person name="Larimer F."/>
            <person name="Land M."/>
            <person name="Kyrpides N."/>
            <person name="Ivanova N."/>
            <person name="Richardson P."/>
        </authorList>
    </citation>
    <scope>NUCLEOTIDE SEQUENCE [LARGE SCALE GENOMIC DNA]</scope>
    <source>
        <strain>ATCC BAA-621 / DSM 15236 / T118</strain>
    </source>
</reference>
<sequence>MTYLLALDQGTSSSRSIVFNAQGQVVAQAQQELTQIYPQPGWVEHDPLEIWRTQLATAREVLAKAGIEAREVRALGITNQRETTVVWSRKTGAPIHNAIVWQDRRAEPTCVELRARGLTPTVQAKTGLLVDAYFSGTKLKWILDHVPGARQQAENGELAFGTVDSWLIWQLTHGTVHATDVSNASRTMLFNVHSNQWDDELLRALDIPAKLLPAIKPSSALFGEVSPDLLGAAIPIGGVAGDQQSALFGQACFKPGMVKNTYGTGCFMLMHTGHSFQSSANGLITTSAAQTTAQPEFAMEGSVFVGGAVVQWLRDGLRAIPSSSEVQALAESVPDAGGVMVVPAFTGLGAPYWKPDARGTITGLSRGSTLAHIARAALESIAFQSAALLQAMSRDAVQAGGSAVAELRVDGGACVNDLLMQFQADLLGIAVVRPAVIETTALGAAYLAGLATGVYRSTDEISTLWQAERRFLPALAPARAAELMEHWEHAVRQTVL</sequence>
<evidence type="ECO:0000255" key="1">
    <source>
        <dbReference type="HAMAP-Rule" id="MF_00186"/>
    </source>
</evidence>
<comment type="function">
    <text evidence="1">Key enzyme in the regulation of glycerol uptake and metabolism. Catalyzes the phosphorylation of glycerol to yield sn-glycerol 3-phosphate.</text>
</comment>
<comment type="catalytic activity">
    <reaction evidence="1">
        <text>glycerol + ATP = sn-glycerol 3-phosphate + ADP + H(+)</text>
        <dbReference type="Rhea" id="RHEA:21644"/>
        <dbReference type="ChEBI" id="CHEBI:15378"/>
        <dbReference type="ChEBI" id="CHEBI:17754"/>
        <dbReference type="ChEBI" id="CHEBI:30616"/>
        <dbReference type="ChEBI" id="CHEBI:57597"/>
        <dbReference type="ChEBI" id="CHEBI:456216"/>
        <dbReference type="EC" id="2.7.1.30"/>
    </reaction>
</comment>
<comment type="activity regulation">
    <text evidence="1">Inhibited by fructose 1,6-bisphosphate (FBP).</text>
</comment>
<comment type="pathway">
    <text evidence="1">Polyol metabolism; glycerol degradation via glycerol kinase pathway; sn-glycerol 3-phosphate from glycerol: step 1/1.</text>
</comment>
<comment type="similarity">
    <text evidence="1">Belongs to the FGGY kinase family.</text>
</comment>
<gene>
    <name evidence="1" type="primary">glpK</name>
    <name type="ordered locus">Rfer_3678</name>
</gene>
<organism>
    <name type="scientific">Albidiferax ferrireducens (strain ATCC BAA-621 / DSM 15236 / T118)</name>
    <name type="common">Rhodoferax ferrireducens</name>
    <dbReference type="NCBI Taxonomy" id="338969"/>
    <lineage>
        <taxon>Bacteria</taxon>
        <taxon>Pseudomonadati</taxon>
        <taxon>Pseudomonadota</taxon>
        <taxon>Betaproteobacteria</taxon>
        <taxon>Burkholderiales</taxon>
        <taxon>Comamonadaceae</taxon>
        <taxon>Rhodoferax</taxon>
    </lineage>
</organism>
<name>GLPK_ALBFT</name>
<dbReference type="EC" id="2.7.1.30" evidence="1"/>
<dbReference type="EMBL" id="CP000267">
    <property type="protein sequence ID" value="ABD71378.1"/>
    <property type="molecule type" value="Genomic_DNA"/>
</dbReference>
<dbReference type="RefSeq" id="WP_011465941.1">
    <property type="nucleotide sequence ID" value="NC_007908.1"/>
</dbReference>
<dbReference type="SMR" id="Q21S75"/>
<dbReference type="STRING" id="338969.Rfer_3678"/>
<dbReference type="KEGG" id="rfr:Rfer_3678"/>
<dbReference type="eggNOG" id="COG0554">
    <property type="taxonomic scope" value="Bacteria"/>
</dbReference>
<dbReference type="HOGENOM" id="CLU_009281_2_3_4"/>
<dbReference type="OrthoDB" id="9805576at2"/>
<dbReference type="UniPathway" id="UPA00618">
    <property type="reaction ID" value="UER00672"/>
</dbReference>
<dbReference type="Proteomes" id="UP000008332">
    <property type="component" value="Chromosome"/>
</dbReference>
<dbReference type="GO" id="GO:0005829">
    <property type="term" value="C:cytosol"/>
    <property type="evidence" value="ECO:0007669"/>
    <property type="project" value="TreeGrafter"/>
</dbReference>
<dbReference type="GO" id="GO:0005524">
    <property type="term" value="F:ATP binding"/>
    <property type="evidence" value="ECO:0007669"/>
    <property type="project" value="UniProtKB-UniRule"/>
</dbReference>
<dbReference type="GO" id="GO:0004370">
    <property type="term" value="F:glycerol kinase activity"/>
    <property type="evidence" value="ECO:0000250"/>
    <property type="project" value="UniProtKB"/>
</dbReference>
<dbReference type="GO" id="GO:0019563">
    <property type="term" value="P:glycerol catabolic process"/>
    <property type="evidence" value="ECO:0007669"/>
    <property type="project" value="UniProtKB-UniRule"/>
</dbReference>
<dbReference type="GO" id="GO:0006071">
    <property type="term" value="P:glycerol metabolic process"/>
    <property type="evidence" value="ECO:0000250"/>
    <property type="project" value="UniProtKB"/>
</dbReference>
<dbReference type="GO" id="GO:0006072">
    <property type="term" value="P:glycerol-3-phosphate metabolic process"/>
    <property type="evidence" value="ECO:0007669"/>
    <property type="project" value="InterPro"/>
</dbReference>
<dbReference type="CDD" id="cd07786">
    <property type="entry name" value="FGGY_EcGK_like"/>
    <property type="match status" value="1"/>
</dbReference>
<dbReference type="FunFam" id="3.30.420.40:FF:000007">
    <property type="entry name" value="Glycerol kinase"/>
    <property type="match status" value="1"/>
</dbReference>
<dbReference type="FunFam" id="3.30.420.40:FF:000008">
    <property type="entry name" value="Glycerol kinase"/>
    <property type="match status" value="1"/>
</dbReference>
<dbReference type="Gene3D" id="3.30.420.40">
    <property type="match status" value="2"/>
</dbReference>
<dbReference type="HAMAP" id="MF_00186">
    <property type="entry name" value="Glycerol_kin"/>
    <property type="match status" value="1"/>
</dbReference>
<dbReference type="InterPro" id="IPR043129">
    <property type="entry name" value="ATPase_NBD"/>
</dbReference>
<dbReference type="InterPro" id="IPR000577">
    <property type="entry name" value="Carb_kinase_FGGY"/>
</dbReference>
<dbReference type="InterPro" id="IPR018483">
    <property type="entry name" value="Carb_kinase_FGGY_CS"/>
</dbReference>
<dbReference type="InterPro" id="IPR018485">
    <property type="entry name" value="FGGY_C"/>
</dbReference>
<dbReference type="InterPro" id="IPR018484">
    <property type="entry name" value="FGGY_N"/>
</dbReference>
<dbReference type="InterPro" id="IPR005999">
    <property type="entry name" value="Glycerol_kin"/>
</dbReference>
<dbReference type="NCBIfam" id="TIGR01311">
    <property type="entry name" value="glycerol_kin"/>
    <property type="match status" value="1"/>
</dbReference>
<dbReference type="NCBIfam" id="NF000756">
    <property type="entry name" value="PRK00047.1"/>
    <property type="match status" value="1"/>
</dbReference>
<dbReference type="PANTHER" id="PTHR10196:SF69">
    <property type="entry name" value="GLYCEROL KINASE"/>
    <property type="match status" value="1"/>
</dbReference>
<dbReference type="PANTHER" id="PTHR10196">
    <property type="entry name" value="SUGAR KINASE"/>
    <property type="match status" value="1"/>
</dbReference>
<dbReference type="Pfam" id="PF02782">
    <property type="entry name" value="FGGY_C"/>
    <property type="match status" value="1"/>
</dbReference>
<dbReference type="Pfam" id="PF00370">
    <property type="entry name" value="FGGY_N"/>
    <property type="match status" value="1"/>
</dbReference>
<dbReference type="PIRSF" id="PIRSF000538">
    <property type="entry name" value="GlpK"/>
    <property type="match status" value="1"/>
</dbReference>
<dbReference type="SUPFAM" id="SSF53067">
    <property type="entry name" value="Actin-like ATPase domain"/>
    <property type="match status" value="2"/>
</dbReference>
<dbReference type="PROSITE" id="PS00933">
    <property type="entry name" value="FGGY_KINASES_1"/>
    <property type="match status" value="1"/>
</dbReference>
<dbReference type="PROSITE" id="PS00445">
    <property type="entry name" value="FGGY_KINASES_2"/>
    <property type="match status" value="1"/>
</dbReference>
<keyword id="KW-0067">ATP-binding</keyword>
<keyword id="KW-0319">Glycerol metabolism</keyword>
<keyword id="KW-0418">Kinase</keyword>
<keyword id="KW-0547">Nucleotide-binding</keyword>
<keyword id="KW-1185">Reference proteome</keyword>
<keyword id="KW-0808">Transferase</keyword>
<protein>
    <recommendedName>
        <fullName evidence="1">Glycerol kinase</fullName>
        <ecNumber evidence="1">2.7.1.30</ecNumber>
    </recommendedName>
    <alternativeName>
        <fullName evidence="1">ATP:glycerol 3-phosphotransferase</fullName>
    </alternativeName>
    <alternativeName>
        <fullName evidence="1">Glycerokinase</fullName>
        <shortName evidence="1">GK</shortName>
    </alternativeName>
</protein>